<reference key="1">
    <citation type="journal article" date="2008" name="J. Bacteriol.">
        <title>Insights into the environmental resistance gene pool from the genome sequence of the multidrug-resistant environmental isolate Escherichia coli SMS-3-5.</title>
        <authorList>
            <person name="Fricke W.F."/>
            <person name="Wright M.S."/>
            <person name="Lindell A.H."/>
            <person name="Harkins D.M."/>
            <person name="Baker-Austin C."/>
            <person name="Ravel J."/>
            <person name="Stepanauskas R."/>
        </authorList>
    </citation>
    <scope>NUCLEOTIDE SEQUENCE [LARGE SCALE GENOMIC DNA]</scope>
    <source>
        <strain>SMS-3-5 / SECEC</strain>
    </source>
</reference>
<protein>
    <recommendedName>
        <fullName evidence="1">Ribonuclease H</fullName>
        <shortName evidence="1">RNase H</shortName>
        <ecNumber evidence="1">3.1.26.4</ecNumber>
    </recommendedName>
</protein>
<sequence length="155" mass="17597">MLKQVEIFTDGSCLGNPGPGGYGAILRYRGREKTFSAGYTRTTNNRMELMAAIVALEALKEHCEVILSTDSQYVRQGITQWIHNWKKRGWKTADKKPVKNVDLWQRLDAALGQHQIKWEWVKGHAGHPENERCDELARAAAMNPTLEDTGYQVEV</sequence>
<feature type="chain" id="PRO_1000116581" description="Ribonuclease H">
    <location>
        <begin position="1"/>
        <end position="155"/>
    </location>
</feature>
<feature type="domain" description="RNase H type-1" evidence="2">
    <location>
        <begin position="1"/>
        <end position="142"/>
    </location>
</feature>
<feature type="binding site" evidence="1">
    <location>
        <position position="10"/>
    </location>
    <ligand>
        <name>Mg(2+)</name>
        <dbReference type="ChEBI" id="CHEBI:18420"/>
        <label>1</label>
    </ligand>
</feature>
<feature type="binding site" evidence="1">
    <location>
        <position position="10"/>
    </location>
    <ligand>
        <name>Mg(2+)</name>
        <dbReference type="ChEBI" id="CHEBI:18420"/>
        <label>2</label>
    </ligand>
</feature>
<feature type="binding site" evidence="1">
    <location>
        <position position="48"/>
    </location>
    <ligand>
        <name>Mg(2+)</name>
        <dbReference type="ChEBI" id="CHEBI:18420"/>
        <label>1</label>
    </ligand>
</feature>
<feature type="binding site" evidence="1">
    <location>
        <position position="70"/>
    </location>
    <ligand>
        <name>Mg(2+)</name>
        <dbReference type="ChEBI" id="CHEBI:18420"/>
        <label>1</label>
    </ligand>
</feature>
<feature type="binding site" evidence="1">
    <location>
        <position position="134"/>
    </location>
    <ligand>
        <name>Mg(2+)</name>
        <dbReference type="ChEBI" id="CHEBI:18420"/>
        <label>2</label>
    </ligand>
</feature>
<proteinExistence type="inferred from homology"/>
<comment type="function">
    <text evidence="1">Endonuclease that specifically degrades the RNA of RNA-DNA hybrids.</text>
</comment>
<comment type="catalytic activity">
    <reaction evidence="1">
        <text>Endonucleolytic cleavage to 5'-phosphomonoester.</text>
        <dbReference type="EC" id="3.1.26.4"/>
    </reaction>
</comment>
<comment type="cofactor">
    <cofactor evidence="1">
        <name>Mg(2+)</name>
        <dbReference type="ChEBI" id="CHEBI:18420"/>
    </cofactor>
    <text evidence="1">Binds 1 Mg(2+) ion per subunit. May bind a second metal ion at a regulatory site, or after substrate binding.</text>
</comment>
<comment type="subunit">
    <text evidence="1">Monomer.</text>
</comment>
<comment type="subcellular location">
    <subcellularLocation>
        <location evidence="1">Cytoplasm</location>
    </subcellularLocation>
</comment>
<comment type="similarity">
    <text evidence="1">Belongs to the RNase H family.</text>
</comment>
<organism>
    <name type="scientific">Escherichia coli (strain SMS-3-5 / SECEC)</name>
    <dbReference type="NCBI Taxonomy" id="439855"/>
    <lineage>
        <taxon>Bacteria</taxon>
        <taxon>Pseudomonadati</taxon>
        <taxon>Pseudomonadota</taxon>
        <taxon>Gammaproteobacteria</taxon>
        <taxon>Enterobacterales</taxon>
        <taxon>Enterobacteriaceae</taxon>
        <taxon>Escherichia</taxon>
    </lineage>
</organism>
<keyword id="KW-0963">Cytoplasm</keyword>
<keyword id="KW-0255">Endonuclease</keyword>
<keyword id="KW-0378">Hydrolase</keyword>
<keyword id="KW-0460">Magnesium</keyword>
<keyword id="KW-0479">Metal-binding</keyword>
<keyword id="KW-0540">Nuclease</keyword>
<evidence type="ECO:0000255" key="1">
    <source>
        <dbReference type="HAMAP-Rule" id="MF_00042"/>
    </source>
</evidence>
<evidence type="ECO:0000255" key="2">
    <source>
        <dbReference type="PROSITE-ProRule" id="PRU00408"/>
    </source>
</evidence>
<dbReference type="EC" id="3.1.26.4" evidence="1"/>
<dbReference type="EMBL" id="CP000970">
    <property type="protein sequence ID" value="ACB18430.1"/>
    <property type="molecule type" value="Genomic_DNA"/>
</dbReference>
<dbReference type="RefSeq" id="WP_000917883.1">
    <property type="nucleotide sequence ID" value="NC_010498.1"/>
</dbReference>
<dbReference type="BMRB" id="B1LHM3"/>
<dbReference type="SMR" id="B1LHM3"/>
<dbReference type="GeneID" id="93777209"/>
<dbReference type="KEGG" id="ecm:EcSMS35_0227"/>
<dbReference type="HOGENOM" id="CLU_030894_6_0_6"/>
<dbReference type="Proteomes" id="UP000007011">
    <property type="component" value="Chromosome"/>
</dbReference>
<dbReference type="GO" id="GO:0005737">
    <property type="term" value="C:cytoplasm"/>
    <property type="evidence" value="ECO:0007669"/>
    <property type="project" value="UniProtKB-SubCell"/>
</dbReference>
<dbReference type="GO" id="GO:0000287">
    <property type="term" value="F:magnesium ion binding"/>
    <property type="evidence" value="ECO:0007669"/>
    <property type="project" value="UniProtKB-UniRule"/>
</dbReference>
<dbReference type="GO" id="GO:0003676">
    <property type="term" value="F:nucleic acid binding"/>
    <property type="evidence" value="ECO:0007669"/>
    <property type="project" value="InterPro"/>
</dbReference>
<dbReference type="GO" id="GO:0004523">
    <property type="term" value="F:RNA-DNA hybrid ribonuclease activity"/>
    <property type="evidence" value="ECO:0007669"/>
    <property type="project" value="UniProtKB-UniRule"/>
</dbReference>
<dbReference type="GO" id="GO:0043137">
    <property type="term" value="P:DNA replication, removal of RNA primer"/>
    <property type="evidence" value="ECO:0007669"/>
    <property type="project" value="TreeGrafter"/>
</dbReference>
<dbReference type="CDD" id="cd09278">
    <property type="entry name" value="RNase_HI_prokaryote_like"/>
    <property type="match status" value="1"/>
</dbReference>
<dbReference type="FunFam" id="3.30.420.10:FF:000008">
    <property type="entry name" value="Ribonuclease H"/>
    <property type="match status" value="1"/>
</dbReference>
<dbReference type="Gene3D" id="3.30.420.10">
    <property type="entry name" value="Ribonuclease H-like superfamily/Ribonuclease H"/>
    <property type="match status" value="1"/>
</dbReference>
<dbReference type="HAMAP" id="MF_00042">
    <property type="entry name" value="RNase_H"/>
    <property type="match status" value="1"/>
</dbReference>
<dbReference type="InterPro" id="IPR050092">
    <property type="entry name" value="RNase_H"/>
</dbReference>
<dbReference type="InterPro" id="IPR012337">
    <property type="entry name" value="RNaseH-like_sf"/>
</dbReference>
<dbReference type="InterPro" id="IPR002156">
    <property type="entry name" value="RNaseH_domain"/>
</dbReference>
<dbReference type="InterPro" id="IPR036397">
    <property type="entry name" value="RNaseH_sf"/>
</dbReference>
<dbReference type="InterPro" id="IPR022892">
    <property type="entry name" value="RNaseHI"/>
</dbReference>
<dbReference type="NCBIfam" id="NF001236">
    <property type="entry name" value="PRK00203.1"/>
    <property type="match status" value="1"/>
</dbReference>
<dbReference type="PANTHER" id="PTHR10642">
    <property type="entry name" value="RIBONUCLEASE H1"/>
    <property type="match status" value="1"/>
</dbReference>
<dbReference type="PANTHER" id="PTHR10642:SF26">
    <property type="entry name" value="RIBONUCLEASE H1"/>
    <property type="match status" value="1"/>
</dbReference>
<dbReference type="Pfam" id="PF00075">
    <property type="entry name" value="RNase_H"/>
    <property type="match status" value="1"/>
</dbReference>
<dbReference type="SUPFAM" id="SSF53098">
    <property type="entry name" value="Ribonuclease H-like"/>
    <property type="match status" value="1"/>
</dbReference>
<dbReference type="PROSITE" id="PS50879">
    <property type="entry name" value="RNASE_H_1"/>
    <property type="match status" value="1"/>
</dbReference>
<name>RNH_ECOSM</name>
<gene>
    <name evidence="1" type="primary">rnhA</name>
    <name type="ordered locus">EcSMS35_0227</name>
</gene>
<accession>B1LHM3</accession>